<feature type="chain" id="PRO_0000408102" description="U3 small nucleolar RNA-associated protein 25">
    <location>
        <begin position="1"/>
        <end position="671"/>
    </location>
</feature>
<feature type="region of interest" description="Disordered" evidence="2">
    <location>
        <begin position="1"/>
        <end position="110"/>
    </location>
</feature>
<feature type="compositionally biased region" description="Acidic residues" evidence="2">
    <location>
        <begin position="10"/>
        <end position="20"/>
    </location>
</feature>
<feature type="compositionally biased region" description="Basic and acidic residues" evidence="2">
    <location>
        <begin position="49"/>
        <end position="59"/>
    </location>
</feature>
<feature type="compositionally biased region" description="Acidic residues" evidence="2">
    <location>
        <begin position="66"/>
        <end position="93"/>
    </location>
</feature>
<organism>
    <name type="scientific">Aspergillus fumigatus (strain ATCC MYA-4609 / CBS 101355 / FGSC A1100 / Af293)</name>
    <name type="common">Neosartorya fumigata</name>
    <dbReference type="NCBI Taxonomy" id="330879"/>
    <lineage>
        <taxon>Eukaryota</taxon>
        <taxon>Fungi</taxon>
        <taxon>Dikarya</taxon>
        <taxon>Ascomycota</taxon>
        <taxon>Pezizomycotina</taxon>
        <taxon>Eurotiomycetes</taxon>
        <taxon>Eurotiomycetidae</taxon>
        <taxon>Eurotiales</taxon>
        <taxon>Aspergillaceae</taxon>
        <taxon>Aspergillus</taxon>
        <taxon>Aspergillus subgen. Fumigati</taxon>
    </lineage>
</organism>
<gene>
    <name type="primary">utp25</name>
    <name type="ORF">AFUA_1G09320</name>
</gene>
<accession>Q4WTH1</accession>
<protein>
    <recommendedName>
        <fullName>U3 small nucleolar RNA-associated protein 25</fullName>
        <shortName>U3 snoRNA-associated protein 25</shortName>
    </recommendedName>
    <alternativeName>
        <fullName>U three protein 25</fullName>
    </alternativeName>
</protein>
<sequence length="671" mass="76208">MDHETQMDDVLSDSDDDEDQQTARPYNELIQLLQVNTEPKGPARKRRKVEYNGGEKRDFVPAANGEEVDAALQGDDDLQEQEPSDEEEEDHPEEADGNHGSDDEEDANDPFETHFSAIDENKLALKIKSAEEKKWKNAKKEISSGLKLVRAIPDVGEGDVSLLPAMKHFSSVKLKKKLCGPATERIPEISGDAQHIAPYIFNYQDVLYGARTTSNSSAMRDILAVHAVNHILKTRDRVLKNNSRIAKEQDADLDLRDQGFTRPKVLYLLPTRQACVRAVESITRFFQPEQQENKKRFLDSFSAADDKSWENKPEDFRELFGGNDDDMFRLGLKFTRKTMKYFSQFYNSDIILASPLGLRTIMDQADVKKRDHDFLSSVELVIVDHADALLMQNWDHVGYILDRLNLQPKEAHGCDFSRVRTWYLDNHARFVRQMIVSASFITPEINSLFSTHMQNFAGKVKVTPVYVGAISEVPLPVSVKQTFSRFDSLTPTKDPDARFKHFTTTVLSSLVRNITSSRDKSSAGGTLIFIPSYLDFVRVRNYFATSSQTTNVSFGAISEYSEVREMTRARTHFMNGRHAVLLYTERLHHFRRYQLRGVKRIVMYGVPENPLFWGEIVGFLGLDPAGVVDAAEGGVRALFSKWDALKLERIVGTKRVGNMLREKGGDTFTFV</sequence>
<evidence type="ECO:0000250" key="1"/>
<evidence type="ECO:0000256" key="2">
    <source>
        <dbReference type="SAM" id="MobiDB-lite"/>
    </source>
</evidence>
<evidence type="ECO:0000305" key="3"/>
<comment type="function">
    <text evidence="1">DEAD-box RNA helicase-like protein required for pre-18S rRNA processing, specifically at sites A0, A1, and A2.</text>
</comment>
<comment type="subunit">
    <text evidence="1">Component of the ribosomal small subunit (SSU) processome composed of at least 40 protein subunits and snoRNA U3.</text>
</comment>
<comment type="subcellular location">
    <subcellularLocation>
        <location evidence="1">Nucleus</location>
        <location evidence="1">Nucleolus</location>
    </subcellularLocation>
</comment>
<comment type="similarity">
    <text evidence="3">Belongs to the UTP25 family.</text>
</comment>
<proteinExistence type="inferred from homology"/>
<dbReference type="EMBL" id="AAHF01000004">
    <property type="protein sequence ID" value="EAL90261.1"/>
    <property type="molecule type" value="Genomic_DNA"/>
</dbReference>
<dbReference type="RefSeq" id="XP_752299.1">
    <property type="nucleotide sequence ID" value="XM_747206.1"/>
</dbReference>
<dbReference type="FunCoup" id="Q4WTH1">
    <property type="interactions" value="1234"/>
</dbReference>
<dbReference type="STRING" id="330879.Q4WTH1"/>
<dbReference type="EnsemblFungi" id="EAL90261">
    <property type="protein sequence ID" value="EAL90261"/>
    <property type="gene ID" value="AFUA_1G09320"/>
</dbReference>
<dbReference type="GeneID" id="3510210"/>
<dbReference type="KEGG" id="afm:AFUA_1G09320"/>
<dbReference type="eggNOG" id="KOG2340">
    <property type="taxonomic scope" value="Eukaryota"/>
</dbReference>
<dbReference type="HOGENOM" id="CLU_018705_0_1_1"/>
<dbReference type="InParanoid" id="Q4WTH1"/>
<dbReference type="OMA" id="QDRGDTF"/>
<dbReference type="OrthoDB" id="10264378at2759"/>
<dbReference type="Proteomes" id="UP000002530">
    <property type="component" value="Chromosome 1"/>
</dbReference>
<dbReference type="GO" id="GO:0005730">
    <property type="term" value="C:nucleolus"/>
    <property type="evidence" value="ECO:0000318"/>
    <property type="project" value="GO_Central"/>
</dbReference>
<dbReference type="GO" id="GO:0032040">
    <property type="term" value="C:small-subunit processome"/>
    <property type="evidence" value="ECO:0000318"/>
    <property type="project" value="GO_Central"/>
</dbReference>
<dbReference type="GO" id="GO:0019843">
    <property type="term" value="F:rRNA binding"/>
    <property type="evidence" value="ECO:0000318"/>
    <property type="project" value="GO_Central"/>
</dbReference>
<dbReference type="GO" id="GO:0034511">
    <property type="term" value="F:U3 snoRNA binding"/>
    <property type="evidence" value="ECO:0000318"/>
    <property type="project" value="GO_Central"/>
</dbReference>
<dbReference type="GO" id="GO:0000462">
    <property type="term" value="P:maturation of SSU-rRNA from tricistronic rRNA transcript (SSU-rRNA, 5.8S rRNA, LSU-rRNA)"/>
    <property type="evidence" value="ECO:0000318"/>
    <property type="project" value="GO_Central"/>
</dbReference>
<dbReference type="FunFam" id="3.40.50.300:FF:002356">
    <property type="entry name" value="U3 small nucleolar RNA-associated protein 25"/>
    <property type="match status" value="1"/>
</dbReference>
<dbReference type="Gene3D" id="3.40.50.300">
    <property type="entry name" value="P-loop containing nucleotide triphosphate hydrolases"/>
    <property type="match status" value="1"/>
</dbReference>
<dbReference type="InterPro" id="IPR027417">
    <property type="entry name" value="P-loop_NTPase"/>
</dbReference>
<dbReference type="InterPro" id="IPR010678">
    <property type="entry name" value="UTP25"/>
</dbReference>
<dbReference type="InterPro" id="IPR053939">
    <property type="entry name" value="UTP25_C"/>
</dbReference>
<dbReference type="InterPro" id="IPR053940">
    <property type="entry name" value="UTP25_NTPase-like"/>
</dbReference>
<dbReference type="PANTHER" id="PTHR12933">
    <property type="entry name" value="ORF PROTEIN-RELATED"/>
    <property type="match status" value="1"/>
</dbReference>
<dbReference type="PANTHER" id="PTHR12933:SF0">
    <property type="entry name" value="U3 SMALL NUCLEOLAR RNA-ASSOCIATED PROTEIN 25 HOMOLOG"/>
    <property type="match status" value="1"/>
</dbReference>
<dbReference type="Pfam" id="PF06862">
    <property type="entry name" value="Utp25_C"/>
    <property type="match status" value="1"/>
</dbReference>
<dbReference type="Pfam" id="PF22916">
    <property type="entry name" value="UTP25_NTPase-like"/>
    <property type="match status" value="1"/>
</dbReference>
<keyword id="KW-0539">Nucleus</keyword>
<keyword id="KW-1185">Reference proteome</keyword>
<keyword id="KW-0687">Ribonucleoprotein</keyword>
<keyword id="KW-0690">Ribosome biogenesis</keyword>
<keyword id="KW-0698">rRNA processing</keyword>
<reference key="1">
    <citation type="journal article" date="2005" name="Nature">
        <title>Genomic sequence of the pathogenic and allergenic filamentous fungus Aspergillus fumigatus.</title>
        <authorList>
            <person name="Nierman W.C."/>
            <person name="Pain A."/>
            <person name="Anderson M.J."/>
            <person name="Wortman J.R."/>
            <person name="Kim H.S."/>
            <person name="Arroyo J."/>
            <person name="Berriman M."/>
            <person name="Abe K."/>
            <person name="Archer D.B."/>
            <person name="Bermejo C."/>
            <person name="Bennett J.W."/>
            <person name="Bowyer P."/>
            <person name="Chen D."/>
            <person name="Collins M."/>
            <person name="Coulsen R."/>
            <person name="Davies R."/>
            <person name="Dyer P.S."/>
            <person name="Farman M.L."/>
            <person name="Fedorova N."/>
            <person name="Fedorova N.D."/>
            <person name="Feldblyum T.V."/>
            <person name="Fischer R."/>
            <person name="Fosker N."/>
            <person name="Fraser A."/>
            <person name="Garcia J.L."/>
            <person name="Garcia M.J."/>
            <person name="Goble A."/>
            <person name="Goldman G.H."/>
            <person name="Gomi K."/>
            <person name="Griffith-Jones S."/>
            <person name="Gwilliam R."/>
            <person name="Haas B.J."/>
            <person name="Haas H."/>
            <person name="Harris D.E."/>
            <person name="Horiuchi H."/>
            <person name="Huang J."/>
            <person name="Humphray S."/>
            <person name="Jimenez J."/>
            <person name="Keller N."/>
            <person name="Khouri H."/>
            <person name="Kitamoto K."/>
            <person name="Kobayashi T."/>
            <person name="Konzack S."/>
            <person name="Kulkarni R."/>
            <person name="Kumagai T."/>
            <person name="Lafton A."/>
            <person name="Latge J.-P."/>
            <person name="Li W."/>
            <person name="Lord A."/>
            <person name="Lu C."/>
            <person name="Majoros W.H."/>
            <person name="May G.S."/>
            <person name="Miller B.L."/>
            <person name="Mohamoud Y."/>
            <person name="Molina M."/>
            <person name="Monod M."/>
            <person name="Mouyna I."/>
            <person name="Mulligan S."/>
            <person name="Murphy L.D."/>
            <person name="O'Neil S."/>
            <person name="Paulsen I."/>
            <person name="Penalva M.A."/>
            <person name="Pertea M."/>
            <person name="Price C."/>
            <person name="Pritchard B.L."/>
            <person name="Quail M.A."/>
            <person name="Rabbinowitsch E."/>
            <person name="Rawlins N."/>
            <person name="Rajandream M.A."/>
            <person name="Reichard U."/>
            <person name="Renauld H."/>
            <person name="Robson G.D."/>
            <person name="Rodriguez de Cordoba S."/>
            <person name="Rodriguez-Pena J.M."/>
            <person name="Ronning C.M."/>
            <person name="Rutter S."/>
            <person name="Salzberg S.L."/>
            <person name="Sanchez M."/>
            <person name="Sanchez-Ferrero J.C."/>
            <person name="Saunders D."/>
            <person name="Seeger K."/>
            <person name="Squares R."/>
            <person name="Squares S."/>
            <person name="Takeuchi M."/>
            <person name="Tekaia F."/>
            <person name="Turner G."/>
            <person name="Vazquez de Aldana C.R."/>
            <person name="Weidman J."/>
            <person name="White O."/>
            <person name="Woodward J.R."/>
            <person name="Yu J.-H."/>
            <person name="Fraser C.M."/>
            <person name="Galagan J.E."/>
            <person name="Asai K."/>
            <person name="Machida M."/>
            <person name="Hall N."/>
            <person name="Barrell B.G."/>
            <person name="Denning D.W."/>
        </authorList>
    </citation>
    <scope>NUCLEOTIDE SEQUENCE [LARGE SCALE GENOMIC DNA]</scope>
    <source>
        <strain>ATCC MYA-4609 / CBS 101355 / FGSC A1100 / Af293</strain>
    </source>
</reference>
<name>UTP25_ASPFU</name>